<accession>Q9ZCS2</accession>
<keyword id="KW-1185">Reference proteome</keyword>
<keyword id="KW-0687">Ribonucleoprotein</keyword>
<keyword id="KW-0689">Ribosomal protein</keyword>
<keyword id="KW-0694">RNA-binding</keyword>
<keyword id="KW-0699">rRNA-binding</keyword>
<comment type="function">
    <text evidence="1">With S4 and S12 plays an important role in translational accuracy.</text>
</comment>
<comment type="function">
    <text evidence="1">Located at the back of the 30S subunit body where it stabilizes the conformation of the head with respect to the body.</text>
</comment>
<comment type="subunit">
    <text evidence="1">Part of the 30S ribosomal subunit. Contacts proteins S4 and S8.</text>
</comment>
<comment type="domain">
    <text>The N-terminal domain interacts with the head of the 30S subunit; the C-terminal domain interacts with the body and contacts protein S4. The interaction surface between S4 and S5 is involved in control of translational fidelity.</text>
</comment>
<comment type="similarity">
    <text evidence="1">Belongs to the universal ribosomal protein uS5 family.</text>
</comment>
<organism>
    <name type="scientific">Rickettsia prowazekii (strain Madrid E)</name>
    <dbReference type="NCBI Taxonomy" id="272947"/>
    <lineage>
        <taxon>Bacteria</taxon>
        <taxon>Pseudomonadati</taxon>
        <taxon>Pseudomonadota</taxon>
        <taxon>Alphaproteobacteria</taxon>
        <taxon>Rickettsiales</taxon>
        <taxon>Rickettsiaceae</taxon>
        <taxon>Rickettsieae</taxon>
        <taxon>Rickettsia</taxon>
        <taxon>typhus group</taxon>
    </lineage>
</organism>
<protein>
    <recommendedName>
        <fullName evidence="1">Small ribosomal subunit protein uS5</fullName>
    </recommendedName>
    <alternativeName>
        <fullName evidence="2">30S ribosomal protein S5</fullName>
    </alternativeName>
</protein>
<feature type="chain" id="PRO_0000131584" description="Small ribosomal subunit protein uS5">
    <location>
        <begin position="1"/>
        <end position="175"/>
    </location>
</feature>
<feature type="domain" description="S5 DRBM" evidence="1">
    <location>
        <begin position="11"/>
        <end position="74"/>
    </location>
</feature>
<evidence type="ECO:0000255" key="1">
    <source>
        <dbReference type="HAMAP-Rule" id="MF_01307"/>
    </source>
</evidence>
<evidence type="ECO:0000305" key="2"/>
<dbReference type="EMBL" id="AJ235272">
    <property type="protein sequence ID" value="CAA15082.1"/>
    <property type="molecule type" value="Genomic_DNA"/>
</dbReference>
<dbReference type="PIR" id="H71669">
    <property type="entry name" value="H71669"/>
</dbReference>
<dbReference type="RefSeq" id="NP_221006.1">
    <property type="nucleotide sequence ID" value="NC_000963.1"/>
</dbReference>
<dbReference type="RefSeq" id="WP_004596227.1">
    <property type="nucleotide sequence ID" value="NC_000963.1"/>
</dbReference>
<dbReference type="SMR" id="Q9ZCS2"/>
<dbReference type="STRING" id="272947.gene:17555719"/>
<dbReference type="EnsemblBacteria" id="CAA15082">
    <property type="protein sequence ID" value="CAA15082"/>
    <property type="gene ID" value="CAA15082"/>
</dbReference>
<dbReference type="GeneID" id="57569767"/>
<dbReference type="KEGG" id="rpr:RP642"/>
<dbReference type="PATRIC" id="fig|272947.5.peg.664"/>
<dbReference type="eggNOG" id="COG0098">
    <property type="taxonomic scope" value="Bacteria"/>
</dbReference>
<dbReference type="HOGENOM" id="CLU_065898_2_2_5"/>
<dbReference type="OrthoDB" id="9809045at2"/>
<dbReference type="Proteomes" id="UP000002480">
    <property type="component" value="Chromosome"/>
</dbReference>
<dbReference type="GO" id="GO:0015935">
    <property type="term" value="C:small ribosomal subunit"/>
    <property type="evidence" value="ECO:0007669"/>
    <property type="project" value="InterPro"/>
</dbReference>
<dbReference type="GO" id="GO:0019843">
    <property type="term" value="F:rRNA binding"/>
    <property type="evidence" value="ECO:0007669"/>
    <property type="project" value="UniProtKB-UniRule"/>
</dbReference>
<dbReference type="GO" id="GO:0003735">
    <property type="term" value="F:structural constituent of ribosome"/>
    <property type="evidence" value="ECO:0007669"/>
    <property type="project" value="InterPro"/>
</dbReference>
<dbReference type="GO" id="GO:0006412">
    <property type="term" value="P:translation"/>
    <property type="evidence" value="ECO:0007669"/>
    <property type="project" value="UniProtKB-UniRule"/>
</dbReference>
<dbReference type="FunFam" id="3.30.230.10:FF:000002">
    <property type="entry name" value="30S ribosomal protein S5"/>
    <property type="match status" value="1"/>
</dbReference>
<dbReference type="Gene3D" id="3.30.160.20">
    <property type="match status" value="1"/>
</dbReference>
<dbReference type="Gene3D" id="3.30.230.10">
    <property type="match status" value="1"/>
</dbReference>
<dbReference type="HAMAP" id="MF_01307_B">
    <property type="entry name" value="Ribosomal_uS5_B"/>
    <property type="match status" value="1"/>
</dbReference>
<dbReference type="InterPro" id="IPR020568">
    <property type="entry name" value="Ribosomal_Su5_D2-typ_SF"/>
</dbReference>
<dbReference type="InterPro" id="IPR000851">
    <property type="entry name" value="Ribosomal_uS5"/>
</dbReference>
<dbReference type="InterPro" id="IPR005712">
    <property type="entry name" value="Ribosomal_uS5_bac-type"/>
</dbReference>
<dbReference type="InterPro" id="IPR005324">
    <property type="entry name" value="Ribosomal_uS5_C"/>
</dbReference>
<dbReference type="InterPro" id="IPR013810">
    <property type="entry name" value="Ribosomal_uS5_N"/>
</dbReference>
<dbReference type="InterPro" id="IPR018192">
    <property type="entry name" value="Ribosomal_uS5_N_CS"/>
</dbReference>
<dbReference type="InterPro" id="IPR014721">
    <property type="entry name" value="Ribsml_uS5_D2-typ_fold_subgr"/>
</dbReference>
<dbReference type="NCBIfam" id="TIGR01021">
    <property type="entry name" value="rpsE_bact"/>
    <property type="match status" value="1"/>
</dbReference>
<dbReference type="PANTHER" id="PTHR48277">
    <property type="entry name" value="MITOCHONDRIAL RIBOSOMAL PROTEIN S5"/>
    <property type="match status" value="1"/>
</dbReference>
<dbReference type="PANTHER" id="PTHR48277:SF1">
    <property type="entry name" value="MITOCHONDRIAL RIBOSOMAL PROTEIN S5"/>
    <property type="match status" value="1"/>
</dbReference>
<dbReference type="Pfam" id="PF00333">
    <property type="entry name" value="Ribosomal_S5"/>
    <property type="match status" value="1"/>
</dbReference>
<dbReference type="Pfam" id="PF03719">
    <property type="entry name" value="Ribosomal_S5_C"/>
    <property type="match status" value="1"/>
</dbReference>
<dbReference type="SUPFAM" id="SSF54768">
    <property type="entry name" value="dsRNA-binding domain-like"/>
    <property type="match status" value="1"/>
</dbReference>
<dbReference type="SUPFAM" id="SSF54211">
    <property type="entry name" value="Ribosomal protein S5 domain 2-like"/>
    <property type="match status" value="1"/>
</dbReference>
<dbReference type="PROSITE" id="PS00585">
    <property type="entry name" value="RIBOSOMAL_S5"/>
    <property type="match status" value="1"/>
</dbReference>
<dbReference type="PROSITE" id="PS50881">
    <property type="entry name" value="S5_DSRBD"/>
    <property type="match status" value="1"/>
</dbReference>
<proteinExistence type="inferred from homology"/>
<sequence length="175" mass="18827">MSKVKKNEEALSEVLVDVNRVTKVVKGGRRFAFSAYVVVGDKAGRVGAGHGKAKEVNEARGKAKQAAKKRMMKVPLYQNRTIHHDVVGKSGAAKVILRRAKAGTGVIAGGSMRAIFDSLGVHDIVAKSIGSTNVYAMISATFDALNKLASPKSIAIRRDKKVHEISIKSYIQVNE</sequence>
<name>RS5_RICPR</name>
<reference key="1">
    <citation type="journal article" date="1998" name="Nature">
        <title>The genome sequence of Rickettsia prowazekii and the origin of mitochondria.</title>
        <authorList>
            <person name="Andersson S.G.E."/>
            <person name="Zomorodipour A."/>
            <person name="Andersson J.O."/>
            <person name="Sicheritz-Ponten T."/>
            <person name="Alsmark U.C.M."/>
            <person name="Podowski R.M."/>
            <person name="Naeslund A.K."/>
            <person name="Eriksson A.-S."/>
            <person name="Winkler H.H."/>
            <person name="Kurland C.G."/>
        </authorList>
    </citation>
    <scope>NUCLEOTIDE SEQUENCE [LARGE SCALE GENOMIC DNA]</scope>
    <source>
        <strain>Madrid E</strain>
    </source>
</reference>
<gene>
    <name evidence="1" type="primary">rpsE</name>
    <name type="ordered locus">RP642</name>
</gene>